<proteinExistence type="inferred from homology"/>
<gene>
    <name evidence="1" type="primary">argB</name>
    <name type="ordered locus">Mjls_2985</name>
</gene>
<sequence>MTAATHTKAQVLAAALPWLKQLHGKIVVVKYGGNAMTDDTLKAAFAADMVFLRNCGVHPVVVHGGGPQISAMLKRLGIPGDFRGGFRVTTPEVLDVARMVLFGQVGRELVGLINAHGPYAVGITGEDAHLFTAVRRDVMVDGVATDIGLVGDVEHVNTEAVRDLIAAGRIPVVSTIAPDANGVVHNINADTAAAALAAALSAEKLLMLTDIEGLYTDWPDRNSLVSQINTADLTELLPTLEAGMVPKIEACLRAVTEGVPSAHVIDGRVEHCVLVELFTDEGTGTKVVNP</sequence>
<feature type="chain" id="PRO_1000010513" description="Acetylglutamate kinase">
    <location>
        <begin position="1"/>
        <end position="290"/>
    </location>
</feature>
<feature type="binding site" evidence="1">
    <location>
        <begin position="65"/>
        <end position="66"/>
    </location>
    <ligand>
        <name>substrate</name>
    </ligand>
</feature>
<feature type="binding site" evidence="1">
    <location>
        <position position="87"/>
    </location>
    <ligand>
        <name>substrate</name>
    </ligand>
</feature>
<feature type="binding site" evidence="1">
    <location>
        <position position="186"/>
    </location>
    <ligand>
        <name>substrate</name>
    </ligand>
</feature>
<feature type="site" description="Transition state stabilizer" evidence="1">
    <location>
        <position position="30"/>
    </location>
</feature>
<feature type="site" description="Transition state stabilizer" evidence="1">
    <location>
        <position position="247"/>
    </location>
</feature>
<protein>
    <recommendedName>
        <fullName evidence="1">Acetylglutamate kinase</fullName>
        <ecNumber evidence="1">2.7.2.8</ecNumber>
    </recommendedName>
    <alternativeName>
        <fullName evidence="1">N-acetyl-L-glutamate 5-phosphotransferase</fullName>
    </alternativeName>
    <alternativeName>
        <fullName evidence="1">NAG kinase</fullName>
        <shortName evidence="1">NAGK</shortName>
    </alternativeName>
</protein>
<dbReference type="EC" id="2.7.2.8" evidence="1"/>
<dbReference type="EMBL" id="CP000580">
    <property type="protein sequence ID" value="ABN98764.1"/>
    <property type="molecule type" value="Genomic_DNA"/>
</dbReference>
<dbReference type="SMR" id="A3Q0T7"/>
<dbReference type="KEGG" id="mjl:Mjls_2985"/>
<dbReference type="HOGENOM" id="CLU_053680_0_0_11"/>
<dbReference type="BioCyc" id="MSP164757:G1G8C-3008-MONOMER"/>
<dbReference type="UniPathway" id="UPA00068">
    <property type="reaction ID" value="UER00107"/>
</dbReference>
<dbReference type="GO" id="GO:0005737">
    <property type="term" value="C:cytoplasm"/>
    <property type="evidence" value="ECO:0007669"/>
    <property type="project" value="UniProtKB-SubCell"/>
</dbReference>
<dbReference type="GO" id="GO:0003991">
    <property type="term" value="F:acetylglutamate kinase activity"/>
    <property type="evidence" value="ECO:0007669"/>
    <property type="project" value="UniProtKB-UniRule"/>
</dbReference>
<dbReference type="GO" id="GO:0005524">
    <property type="term" value="F:ATP binding"/>
    <property type="evidence" value="ECO:0007669"/>
    <property type="project" value="UniProtKB-UniRule"/>
</dbReference>
<dbReference type="GO" id="GO:0042450">
    <property type="term" value="P:arginine biosynthetic process via ornithine"/>
    <property type="evidence" value="ECO:0007669"/>
    <property type="project" value="UniProtKB-UniRule"/>
</dbReference>
<dbReference type="GO" id="GO:0006526">
    <property type="term" value="P:L-arginine biosynthetic process"/>
    <property type="evidence" value="ECO:0007669"/>
    <property type="project" value="UniProtKB-UniPathway"/>
</dbReference>
<dbReference type="CDD" id="cd04250">
    <property type="entry name" value="AAK_NAGK-C"/>
    <property type="match status" value="1"/>
</dbReference>
<dbReference type="FunFam" id="3.40.1160.10:FF:000004">
    <property type="entry name" value="Acetylglutamate kinase"/>
    <property type="match status" value="1"/>
</dbReference>
<dbReference type="Gene3D" id="3.40.1160.10">
    <property type="entry name" value="Acetylglutamate kinase-like"/>
    <property type="match status" value="1"/>
</dbReference>
<dbReference type="HAMAP" id="MF_00082">
    <property type="entry name" value="ArgB"/>
    <property type="match status" value="1"/>
</dbReference>
<dbReference type="InterPro" id="IPR036393">
    <property type="entry name" value="AceGlu_kinase-like_sf"/>
</dbReference>
<dbReference type="InterPro" id="IPR004662">
    <property type="entry name" value="AcgluKinase_fam"/>
</dbReference>
<dbReference type="InterPro" id="IPR037528">
    <property type="entry name" value="ArgB"/>
</dbReference>
<dbReference type="InterPro" id="IPR001048">
    <property type="entry name" value="Asp/Glu/Uridylate_kinase"/>
</dbReference>
<dbReference type="InterPro" id="IPR001057">
    <property type="entry name" value="Glu/AcGlu_kinase"/>
</dbReference>
<dbReference type="InterPro" id="IPR041727">
    <property type="entry name" value="NAGK-C"/>
</dbReference>
<dbReference type="NCBIfam" id="TIGR00761">
    <property type="entry name" value="argB"/>
    <property type="match status" value="1"/>
</dbReference>
<dbReference type="PANTHER" id="PTHR23342">
    <property type="entry name" value="N-ACETYLGLUTAMATE SYNTHASE"/>
    <property type="match status" value="1"/>
</dbReference>
<dbReference type="PANTHER" id="PTHR23342:SF0">
    <property type="entry name" value="N-ACETYLGLUTAMATE SYNTHASE, MITOCHONDRIAL"/>
    <property type="match status" value="1"/>
</dbReference>
<dbReference type="Pfam" id="PF00696">
    <property type="entry name" value="AA_kinase"/>
    <property type="match status" value="1"/>
</dbReference>
<dbReference type="PIRSF" id="PIRSF000728">
    <property type="entry name" value="NAGK"/>
    <property type="match status" value="1"/>
</dbReference>
<dbReference type="PRINTS" id="PR00474">
    <property type="entry name" value="GLU5KINASE"/>
</dbReference>
<dbReference type="SUPFAM" id="SSF53633">
    <property type="entry name" value="Carbamate kinase-like"/>
    <property type="match status" value="1"/>
</dbReference>
<name>ARGB_MYCSJ</name>
<organism>
    <name type="scientific">Mycobacterium sp. (strain JLS)</name>
    <dbReference type="NCBI Taxonomy" id="164757"/>
    <lineage>
        <taxon>Bacteria</taxon>
        <taxon>Bacillati</taxon>
        <taxon>Actinomycetota</taxon>
        <taxon>Actinomycetes</taxon>
        <taxon>Mycobacteriales</taxon>
        <taxon>Mycobacteriaceae</taxon>
        <taxon>Mycobacterium</taxon>
    </lineage>
</organism>
<reference key="1">
    <citation type="submission" date="2007-02" db="EMBL/GenBank/DDBJ databases">
        <title>Complete sequence of Mycobacterium sp. JLS.</title>
        <authorList>
            <consortium name="US DOE Joint Genome Institute"/>
            <person name="Copeland A."/>
            <person name="Lucas S."/>
            <person name="Lapidus A."/>
            <person name="Barry K."/>
            <person name="Detter J.C."/>
            <person name="Glavina del Rio T."/>
            <person name="Hammon N."/>
            <person name="Israni S."/>
            <person name="Dalin E."/>
            <person name="Tice H."/>
            <person name="Pitluck S."/>
            <person name="Chain P."/>
            <person name="Malfatti S."/>
            <person name="Shin M."/>
            <person name="Vergez L."/>
            <person name="Schmutz J."/>
            <person name="Larimer F."/>
            <person name="Land M."/>
            <person name="Hauser L."/>
            <person name="Kyrpides N."/>
            <person name="Mikhailova N."/>
            <person name="Miller C.D."/>
            <person name="Anderson A.J."/>
            <person name="Sims R.C."/>
            <person name="Richardson P."/>
        </authorList>
    </citation>
    <scope>NUCLEOTIDE SEQUENCE [LARGE SCALE GENOMIC DNA]</scope>
    <source>
        <strain>JLS</strain>
    </source>
</reference>
<keyword id="KW-0028">Amino-acid biosynthesis</keyword>
<keyword id="KW-0055">Arginine biosynthesis</keyword>
<keyword id="KW-0067">ATP-binding</keyword>
<keyword id="KW-0963">Cytoplasm</keyword>
<keyword id="KW-0418">Kinase</keyword>
<keyword id="KW-0547">Nucleotide-binding</keyword>
<keyword id="KW-0808">Transferase</keyword>
<evidence type="ECO:0000255" key="1">
    <source>
        <dbReference type="HAMAP-Rule" id="MF_00082"/>
    </source>
</evidence>
<accession>A3Q0T7</accession>
<comment type="function">
    <text evidence="1">Catalyzes the ATP-dependent phosphorylation of N-acetyl-L-glutamate.</text>
</comment>
<comment type="catalytic activity">
    <reaction evidence="1">
        <text>N-acetyl-L-glutamate + ATP = N-acetyl-L-glutamyl 5-phosphate + ADP</text>
        <dbReference type="Rhea" id="RHEA:14629"/>
        <dbReference type="ChEBI" id="CHEBI:30616"/>
        <dbReference type="ChEBI" id="CHEBI:44337"/>
        <dbReference type="ChEBI" id="CHEBI:57936"/>
        <dbReference type="ChEBI" id="CHEBI:456216"/>
        <dbReference type="EC" id="2.7.2.8"/>
    </reaction>
</comment>
<comment type="pathway">
    <text evidence="1">Amino-acid biosynthesis; L-arginine biosynthesis; N(2)-acetyl-L-ornithine from L-glutamate: step 2/4.</text>
</comment>
<comment type="subcellular location">
    <subcellularLocation>
        <location evidence="1">Cytoplasm</location>
    </subcellularLocation>
</comment>
<comment type="similarity">
    <text evidence="1">Belongs to the acetylglutamate kinase family. ArgB subfamily.</text>
</comment>